<evidence type="ECO:0000250" key="1">
    <source>
        <dbReference type="UniProtKB" id="Q8VBV9"/>
    </source>
</evidence>
<evidence type="ECO:0000250" key="2">
    <source>
        <dbReference type="UniProtKB" id="Q9H255"/>
    </source>
</evidence>
<evidence type="ECO:0000255" key="3"/>
<evidence type="ECO:0000255" key="4">
    <source>
        <dbReference type="PROSITE-ProRule" id="PRU00521"/>
    </source>
</evidence>
<evidence type="ECO:0000269" key="5">
    <source>
    </source>
</evidence>
<evidence type="ECO:0000303" key="6">
    <source>
    </source>
</evidence>
<evidence type="ECO:0000303" key="7">
    <source>
    </source>
</evidence>
<reference key="1">
    <citation type="journal article" date="1998" name="Recept. Channels">
        <title>Identification of a novel G-protein coupled receptor expressed in distinct brain regions and a defined olfactory zone.</title>
        <authorList>
            <person name="Raming K."/>
            <person name="Konzelmann S."/>
            <person name="Breer H."/>
        </authorList>
    </citation>
    <scope>NUCLEOTIDE SEQUENCE [MRNA]</scope>
    <source>
        <tissue>Brain</tissue>
    </source>
</reference>
<reference key="2">
    <citation type="journal article" date="2001" name="Gene">
        <title>Cloning and genetic characterization of an evolutionarily conserved human olfactory receptor that is differentially expressed across species.</title>
        <authorList>
            <person name="Yuan T.T."/>
            <person name="Toy P."/>
            <person name="McClary J.A."/>
            <person name="Lin R.J."/>
            <person name="Miyamoto N.G."/>
            <person name="Kretschmer P.J."/>
        </authorList>
    </citation>
    <scope>TISSUE SPECIFICITY</scope>
</reference>
<organism>
    <name type="scientific">Rattus norvegicus</name>
    <name type="common">Rat</name>
    <dbReference type="NCBI Taxonomy" id="10116"/>
    <lineage>
        <taxon>Eukaryota</taxon>
        <taxon>Metazoa</taxon>
        <taxon>Chordata</taxon>
        <taxon>Craniata</taxon>
        <taxon>Vertebrata</taxon>
        <taxon>Euteleostomi</taxon>
        <taxon>Mammalia</taxon>
        <taxon>Eutheria</taxon>
        <taxon>Euarchontoglires</taxon>
        <taxon>Glires</taxon>
        <taxon>Rodentia</taxon>
        <taxon>Myomorpha</taxon>
        <taxon>Muroidea</taxon>
        <taxon>Muridae</taxon>
        <taxon>Murinae</taxon>
        <taxon>Rattus</taxon>
    </lineage>
</organism>
<comment type="function">
    <text evidence="1 2">Olfactory receptor. The activity of this receptor is probably mediated by G-proteins which induce elevation of intracellular Ca(2+), cAMP and activation of phosphorylation of the protein kinases PKA and MAPK3/MAPK1. Activation of OR51E2 may affect melanocyte proliferation, differentiation, and melanogenesis and may increase proliferation and migration of primary retinal pigment epithelial (RPE) cells. Activated by the short chain fatty acids (SCFA), acetate and propionate. In response to SCFA, may positively regulate renin secretion and increase blood pressure (By similarity). May also be activated by steroid hormones and regulate cell proliferation (By similarity). Activated by L-lactate in glomus cells (By similarity).</text>
</comment>
<comment type="subcellular location">
    <subcellularLocation>
        <location evidence="2">Cell membrane</location>
        <topology evidence="3">Multi-pass membrane protein</topology>
    </subcellularLocation>
    <subcellularLocation>
        <location evidence="2">Early endosome membrane</location>
        <topology evidence="3">Multi-pass membrane protein</topology>
    </subcellularLocation>
</comment>
<comment type="tissue specificity">
    <text evidence="5">Expressed in brain and liver. Expressed only in some areas of the brain and in the olfactory epithelium.</text>
</comment>
<comment type="similarity">
    <text evidence="4">Belongs to the G-protein coupled receptor 1 family.</text>
</comment>
<proteinExistence type="evidence at transcript level"/>
<keyword id="KW-1003">Cell membrane</keyword>
<keyword id="KW-1015">Disulfide bond</keyword>
<keyword id="KW-0967">Endosome</keyword>
<keyword id="KW-0297">G-protein coupled receptor</keyword>
<keyword id="KW-0325">Glycoprotein</keyword>
<keyword id="KW-0472">Membrane</keyword>
<keyword id="KW-0552">Olfaction</keyword>
<keyword id="KW-0675">Receptor</keyword>
<keyword id="KW-1185">Reference proteome</keyword>
<keyword id="KW-0716">Sensory transduction</keyword>
<keyword id="KW-0807">Transducer</keyword>
<keyword id="KW-0812">Transmembrane</keyword>
<keyword id="KW-1133">Transmembrane helix</keyword>
<dbReference type="EMBL" id="AF079864">
    <property type="protein sequence ID" value="AAD12761.1"/>
    <property type="molecule type" value="mRNA"/>
</dbReference>
<dbReference type="RefSeq" id="NP_775415.1">
    <property type="nucleotide sequence ID" value="NM_173293.1"/>
</dbReference>
<dbReference type="SMR" id="O88628"/>
<dbReference type="FunCoup" id="O88628">
    <property type="interactions" value="1009"/>
</dbReference>
<dbReference type="STRING" id="10116.ENSRNOP00000025097"/>
<dbReference type="GlyCosmos" id="O88628">
    <property type="glycosylation" value="1 site, No reported glycans"/>
</dbReference>
<dbReference type="GlyGen" id="O88628">
    <property type="glycosylation" value="1 site"/>
</dbReference>
<dbReference type="PaxDb" id="10116-ENSRNOP00000025097"/>
<dbReference type="GeneID" id="170816"/>
<dbReference type="KEGG" id="rno:170816"/>
<dbReference type="UCSC" id="RGD:628858">
    <property type="organism name" value="rat"/>
</dbReference>
<dbReference type="AGR" id="RGD:628858"/>
<dbReference type="CTD" id="170816"/>
<dbReference type="RGD" id="628858">
    <property type="gene designation" value="Olr59"/>
</dbReference>
<dbReference type="eggNOG" id="ENOG502QVRN">
    <property type="taxonomic scope" value="Eukaryota"/>
</dbReference>
<dbReference type="InParanoid" id="O88628"/>
<dbReference type="PhylomeDB" id="O88628"/>
<dbReference type="PRO" id="PR:O88628"/>
<dbReference type="Proteomes" id="UP000002494">
    <property type="component" value="Unplaced"/>
</dbReference>
<dbReference type="GO" id="GO:0031901">
    <property type="term" value="C:early endosome membrane"/>
    <property type="evidence" value="ECO:0000250"/>
    <property type="project" value="UniProtKB"/>
</dbReference>
<dbReference type="GO" id="GO:0005886">
    <property type="term" value="C:plasma membrane"/>
    <property type="evidence" value="ECO:0000250"/>
    <property type="project" value="UniProtKB"/>
</dbReference>
<dbReference type="GO" id="GO:0004930">
    <property type="term" value="F:G protein-coupled receptor activity"/>
    <property type="evidence" value="ECO:0007669"/>
    <property type="project" value="UniProtKB-KW"/>
</dbReference>
<dbReference type="GO" id="GO:0003707">
    <property type="term" value="F:nuclear steroid receptor activity"/>
    <property type="evidence" value="ECO:0000250"/>
    <property type="project" value="UniProtKB"/>
</dbReference>
<dbReference type="GO" id="GO:0004984">
    <property type="term" value="F:olfactory receptor activity"/>
    <property type="evidence" value="ECO:0000250"/>
    <property type="project" value="UniProtKB"/>
</dbReference>
<dbReference type="GO" id="GO:0038023">
    <property type="term" value="F:signaling receptor activity"/>
    <property type="evidence" value="ECO:0000250"/>
    <property type="project" value="UniProtKB"/>
</dbReference>
<dbReference type="GO" id="GO:0007189">
    <property type="term" value="P:adenylate cyclase-activating G protein-coupled receptor signaling pathway"/>
    <property type="evidence" value="ECO:0000250"/>
    <property type="project" value="UniProtKB"/>
</dbReference>
<dbReference type="GO" id="GO:0016477">
    <property type="term" value="P:cell migration"/>
    <property type="evidence" value="ECO:0000250"/>
    <property type="project" value="UniProtKB"/>
</dbReference>
<dbReference type="GO" id="GO:0071398">
    <property type="term" value="P:cellular response to fatty acid"/>
    <property type="evidence" value="ECO:0000250"/>
    <property type="project" value="UniProtKB"/>
</dbReference>
<dbReference type="GO" id="GO:0030318">
    <property type="term" value="P:melanocyte differentiation"/>
    <property type="evidence" value="ECO:0000250"/>
    <property type="project" value="UniProtKB"/>
</dbReference>
<dbReference type="GO" id="GO:0097325">
    <property type="term" value="P:melanocyte proliferation"/>
    <property type="evidence" value="ECO:0000250"/>
    <property type="project" value="UniProtKB"/>
</dbReference>
<dbReference type="GO" id="GO:0045777">
    <property type="term" value="P:positive regulation of blood pressure"/>
    <property type="evidence" value="ECO:0000250"/>
    <property type="project" value="UniProtKB"/>
</dbReference>
<dbReference type="GO" id="GO:1900135">
    <property type="term" value="P:positive regulation of renin secretion into blood stream"/>
    <property type="evidence" value="ECO:0000250"/>
    <property type="project" value="UniProtKB"/>
</dbReference>
<dbReference type="GO" id="GO:0043401">
    <property type="term" value="P:steroid hormone receptor signaling pathway"/>
    <property type="evidence" value="ECO:0000250"/>
    <property type="project" value="UniProtKB"/>
</dbReference>
<dbReference type="CDD" id="cd15222">
    <property type="entry name" value="7tmA_OR51-like"/>
    <property type="match status" value="1"/>
</dbReference>
<dbReference type="FunFam" id="1.20.1070.10:FF:000002">
    <property type="entry name" value="Olfactory receptor"/>
    <property type="match status" value="1"/>
</dbReference>
<dbReference type="Gene3D" id="1.20.1070.10">
    <property type="entry name" value="Rhodopsin 7-helix transmembrane proteins"/>
    <property type="match status" value="1"/>
</dbReference>
<dbReference type="InterPro" id="IPR000276">
    <property type="entry name" value="GPCR_Rhodpsn"/>
</dbReference>
<dbReference type="InterPro" id="IPR017452">
    <property type="entry name" value="GPCR_Rhodpsn_7TM"/>
</dbReference>
<dbReference type="InterPro" id="IPR000725">
    <property type="entry name" value="Olfact_rcpt"/>
</dbReference>
<dbReference type="InterPro" id="IPR050402">
    <property type="entry name" value="OR51/52/56-like"/>
</dbReference>
<dbReference type="PANTHER" id="PTHR26450:SF92">
    <property type="entry name" value="OLFACTORY RECEPTOR 51E2"/>
    <property type="match status" value="1"/>
</dbReference>
<dbReference type="PANTHER" id="PTHR26450">
    <property type="entry name" value="OLFACTORY RECEPTOR 56B1-RELATED"/>
    <property type="match status" value="1"/>
</dbReference>
<dbReference type="Pfam" id="PF13853">
    <property type="entry name" value="7tm_4"/>
    <property type="match status" value="1"/>
</dbReference>
<dbReference type="PRINTS" id="PR00237">
    <property type="entry name" value="GPCRRHODOPSN"/>
</dbReference>
<dbReference type="PRINTS" id="PR00245">
    <property type="entry name" value="OLFACTORYR"/>
</dbReference>
<dbReference type="SUPFAM" id="SSF81321">
    <property type="entry name" value="Family A G protein-coupled receptor-like"/>
    <property type="match status" value="1"/>
</dbReference>
<dbReference type="PROSITE" id="PS00237">
    <property type="entry name" value="G_PROTEIN_RECEP_F1_1"/>
    <property type="match status" value="1"/>
</dbReference>
<dbReference type="PROSITE" id="PS50262">
    <property type="entry name" value="G_PROTEIN_RECEP_F1_2"/>
    <property type="match status" value="1"/>
</dbReference>
<name>O51E2_RAT</name>
<protein>
    <recommendedName>
        <fullName>Olfactory receptor 51E2</fullName>
    </recommendedName>
    <alternativeName>
        <fullName evidence="7">G-protein coupled receptor RA1c</fullName>
    </alternativeName>
    <alternativeName>
        <fullName>Olfactory receptor 59</fullName>
    </alternativeName>
</protein>
<accession>O88628</accession>
<gene>
    <name type="primary">Or51e2</name>
    <name type="synonym">Olr59</name>
    <name evidence="6" type="synonym">Psgr</name>
</gene>
<sequence length="320" mass="35505">MSSCNFTHATFMLIGIPGLEEAHFWFGFPLLSMYAVALFGNCIVVFIVRTERSLHAPMYLFLCMLAAIDLALSTSTMPKILALFWFDSREITFDACLAQMFFIHALSAIESTILLAMAFDRYVAICHPLRHAAVLNNTVTVQIGMVALVRGSLFFFPLPLLIKRLAFCHSNVLSHSYCVHQDVMKLAYTDTLPNVVYGLTAILLVMGVDVMFISLSYFLIIRAVLQLPSKSERAKAFGTCVSHIGVVLAFYVPLIGLSVVHRFGNSLDPIVHVLMGDVYLLLPPVINPIIYGAKTKQIRTRVLAMFKISCDKDIEAGGNT</sequence>
<feature type="chain" id="PRO_0000150752" description="Olfactory receptor 51E2">
    <location>
        <begin position="1"/>
        <end position="320"/>
    </location>
</feature>
<feature type="topological domain" description="Extracellular" evidence="3">
    <location>
        <begin position="1"/>
        <end position="24"/>
    </location>
</feature>
<feature type="transmembrane region" description="Helical; Name=1" evidence="3">
    <location>
        <begin position="25"/>
        <end position="45"/>
    </location>
</feature>
<feature type="topological domain" description="Cytoplasmic" evidence="3">
    <location>
        <begin position="46"/>
        <end position="53"/>
    </location>
</feature>
<feature type="transmembrane region" description="Helical; Name=2" evidence="3">
    <location>
        <begin position="54"/>
        <end position="74"/>
    </location>
</feature>
<feature type="topological domain" description="Extracellular" evidence="3">
    <location>
        <begin position="75"/>
        <end position="98"/>
    </location>
</feature>
<feature type="transmembrane region" description="Helical; Name=3" evidence="3">
    <location>
        <begin position="99"/>
        <end position="119"/>
    </location>
</feature>
<feature type="topological domain" description="Cytoplasmic" evidence="3">
    <location>
        <begin position="120"/>
        <end position="138"/>
    </location>
</feature>
<feature type="transmembrane region" description="Helical; Name=4" evidence="3">
    <location>
        <begin position="139"/>
        <end position="159"/>
    </location>
</feature>
<feature type="topological domain" description="Extracellular" evidence="3">
    <location>
        <begin position="160"/>
        <end position="195"/>
    </location>
</feature>
<feature type="transmembrane region" description="Helical; Name=5" evidence="3">
    <location>
        <begin position="196"/>
        <end position="216"/>
    </location>
</feature>
<feature type="topological domain" description="Cytoplasmic" evidence="3">
    <location>
        <begin position="217"/>
        <end position="236"/>
    </location>
</feature>
<feature type="transmembrane region" description="Helical; Name=6" evidence="3">
    <location>
        <begin position="237"/>
        <end position="257"/>
    </location>
</feature>
<feature type="topological domain" description="Extracellular" evidence="3">
    <location>
        <begin position="258"/>
        <end position="272"/>
    </location>
</feature>
<feature type="transmembrane region" description="Helical; Name=7" evidence="3">
    <location>
        <begin position="273"/>
        <end position="293"/>
    </location>
</feature>
<feature type="topological domain" description="Cytoplasmic" evidence="3">
    <location>
        <begin position="294"/>
        <end position="320"/>
    </location>
</feature>
<feature type="glycosylation site" description="N-linked (GlcNAc...) asparagine" evidence="3">
    <location>
        <position position="5"/>
    </location>
</feature>
<feature type="disulfide bond" evidence="4">
    <location>
        <begin position="96"/>
        <end position="178"/>
    </location>
</feature>